<organism>
    <name type="scientific">Escherichia coli O81 (strain ED1a)</name>
    <dbReference type="NCBI Taxonomy" id="585397"/>
    <lineage>
        <taxon>Bacteria</taxon>
        <taxon>Pseudomonadati</taxon>
        <taxon>Pseudomonadota</taxon>
        <taxon>Gammaproteobacteria</taxon>
        <taxon>Enterobacterales</taxon>
        <taxon>Enterobacteriaceae</taxon>
        <taxon>Escherichia</taxon>
    </lineage>
</organism>
<comment type="similarity">
    <text evidence="1">Belongs to the UPF0246 family.</text>
</comment>
<gene>
    <name evidence="1" type="primary">yaaA</name>
    <name type="ordered locus">ECED1_0005</name>
</gene>
<feature type="chain" id="PRO_1000200420" description="UPF0246 protein YaaA">
    <location>
        <begin position="1"/>
        <end position="258"/>
    </location>
</feature>
<sequence>MLILISPAKTLDYQSPLTTTRYTLPELLDNSQQLIHEARKLTPPQISSLMRISDKLAGINAARFHDWQPDFTPENARQAILAFKGDVYTGLQAETFSEDDFDFAQQHLRMLSGLYGVLRPLDLMQPYRLEMGIRLENARGKDLYQFWGDIITNKLNEALAAQGDNVVINLASDEYFKSVKPKKLNAEIIKPVFLDEKNGKFKIISFYAKKARGLMSRFIIENRLTKPEQLTGFNSEGYFFDEASSSNGELVFKRYEQR</sequence>
<evidence type="ECO:0000255" key="1">
    <source>
        <dbReference type="HAMAP-Rule" id="MF_00652"/>
    </source>
</evidence>
<dbReference type="EMBL" id="CU928162">
    <property type="protein sequence ID" value="CAR06229.1"/>
    <property type="molecule type" value="Genomic_DNA"/>
</dbReference>
<dbReference type="RefSeq" id="WP_000906193.1">
    <property type="nucleotide sequence ID" value="NC_011745.1"/>
</dbReference>
<dbReference type="SMR" id="B7MNL4"/>
<dbReference type="KEGG" id="ecq:ECED1_0005"/>
<dbReference type="HOGENOM" id="CLU_061989_0_0_6"/>
<dbReference type="Proteomes" id="UP000000748">
    <property type="component" value="Chromosome"/>
</dbReference>
<dbReference type="GO" id="GO:0005829">
    <property type="term" value="C:cytosol"/>
    <property type="evidence" value="ECO:0007669"/>
    <property type="project" value="TreeGrafter"/>
</dbReference>
<dbReference type="GO" id="GO:0033194">
    <property type="term" value="P:response to hydroperoxide"/>
    <property type="evidence" value="ECO:0007669"/>
    <property type="project" value="TreeGrafter"/>
</dbReference>
<dbReference type="HAMAP" id="MF_00652">
    <property type="entry name" value="UPF0246"/>
    <property type="match status" value="1"/>
</dbReference>
<dbReference type="InterPro" id="IPR005583">
    <property type="entry name" value="YaaA"/>
</dbReference>
<dbReference type="NCBIfam" id="NF002541">
    <property type="entry name" value="PRK02101.1-1"/>
    <property type="match status" value="1"/>
</dbReference>
<dbReference type="NCBIfam" id="NF002542">
    <property type="entry name" value="PRK02101.1-3"/>
    <property type="match status" value="1"/>
</dbReference>
<dbReference type="PANTHER" id="PTHR30283:SF4">
    <property type="entry name" value="PEROXIDE STRESS RESISTANCE PROTEIN YAAA"/>
    <property type="match status" value="1"/>
</dbReference>
<dbReference type="PANTHER" id="PTHR30283">
    <property type="entry name" value="PEROXIDE STRESS RESPONSE PROTEIN YAAA"/>
    <property type="match status" value="1"/>
</dbReference>
<dbReference type="Pfam" id="PF03883">
    <property type="entry name" value="H2O2_YaaD"/>
    <property type="match status" value="1"/>
</dbReference>
<accession>B7MNL4</accession>
<protein>
    <recommendedName>
        <fullName evidence="1">UPF0246 protein YaaA</fullName>
    </recommendedName>
</protein>
<proteinExistence type="inferred from homology"/>
<reference key="1">
    <citation type="journal article" date="2009" name="PLoS Genet.">
        <title>Organised genome dynamics in the Escherichia coli species results in highly diverse adaptive paths.</title>
        <authorList>
            <person name="Touchon M."/>
            <person name="Hoede C."/>
            <person name="Tenaillon O."/>
            <person name="Barbe V."/>
            <person name="Baeriswyl S."/>
            <person name="Bidet P."/>
            <person name="Bingen E."/>
            <person name="Bonacorsi S."/>
            <person name="Bouchier C."/>
            <person name="Bouvet O."/>
            <person name="Calteau A."/>
            <person name="Chiapello H."/>
            <person name="Clermont O."/>
            <person name="Cruveiller S."/>
            <person name="Danchin A."/>
            <person name="Diard M."/>
            <person name="Dossat C."/>
            <person name="Karoui M.E."/>
            <person name="Frapy E."/>
            <person name="Garry L."/>
            <person name="Ghigo J.M."/>
            <person name="Gilles A.M."/>
            <person name="Johnson J."/>
            <person name="Le Bouguenec C."/>
            <person name="Lescat M."/>
            <person name="Mangenot S."/>
            <person name="Martinez-Jehanne V."/>
            <person name="Matic I."/>
            <person name="Nassif X."/>
            <person name="Oztas S."/>
            <person name="Petit M.A."/>
            <person name="Pichon C."/>
            <person name="Rouy Z."/>
            <person name="Ruf C.S."/>
            <person name="Schneider D."/>
            <person name="Tourret J."/>
            <person name="Vacherie B."/>
            <person name="Vallenet D."/>
            <person name="Medigue C."/>
            <person name="Rocha E.P.C."/>
            <person name="Denamur E."/>
        </authorList>
    </citation>
    <scope>NUCLEOTIDE SEQUENCE [LARGE SCALE GENOMIC DNA]</scope>
    <source>
        <strain>ED1a</strain>
    </source>
</reference>
<name>YAAA_ECO81</name>